<reference key="1">
    <citation type="journal article" date="2010" name="J. Proteome Res.">
        <title>Molecular diversification of peptide toxins from the tarantula Haplopelma hainanum (Ornithoctonus hainana) venom based on transcriptomic, peptidomic, and genomic analyses.</title>
        <authorList>
            <person name="Tang X."/>
            <person name="Zhang Y."/>
            <person name="Hu W."/>
            <person name="Xu D."/>
            <person name="Tao H."/>
            <person name="Yang X."/>
            <person name="Li Y."/>
            <person name="Jiang L."/>
            <person name="Liang S."/>
        </authorList>
    </citation>
    <scope>NUCLEOTIDE SEQUENCE [LARGE SCALE GENOMIC DNA / MRNA]</scope>
    <source>
        <tissue>Venom gland</tissue>
    </source>
</reference>
<sequence>MGIARILSAVLFLSVLFVVTFPTLLSADHHDGRIDTCRLPSDRGRCKASFERWYFNGTTCTKFVYGGYGGNDNRFPTEKACMKRCAKA</sequence>
<proteinExistence type="inferred from homology"/>
<evidence type="ECO:0000250" key="1"/>
<evidence type="ECO:0000250" key="2">
    <source>
        <dbReference type="UniProtKB" id="P68425"/>
    </source>
</evidence>
<evidence type="ECO:0000255" key="3"/>
<evidence type="ECO:0000255" key="4">
    <source>
        <dbReference type="PROSITE-ProRule" id="PRU00031"/>
    </source>
</evidence>
<evidence type="ECO:0000305" key="5"/>
<evidence type="ECO:0000305" key="6">
    <source>
    </source>
</evidence>
<feature type="signal peptide" evidence="3">
    <location>
        <begin position="1"/>
        <end position="27"/>
    </location>
</feature>
<feature type="propeptide" id="PRO_0000400996" evidence="1">
    <location>
        <begin position="28"/>
        <end position="33"/>
    </location>
</feature>
<feature type="peptide" id="PRO_0000400997" description="Kunitz-type U15-theraphotoxin-Hhn1j">
    <location>
        <begin position="34"/>
        <end position="88"/>
    </location>
</feature>
<feature type="domain" description="BPTI/Kunitz inhibitor" evidence="4">
    <location>
        <begin position="37"/>
        <end position="85"/>
    </location>
</feature>
<feature type="site" description="Reactive bond for trypsin" evidence="1">
    <location>
        <begin position="47"/>
        <end position="48"/>
    </location>
</feature>
<feature type="disulfide bond" evidence="4">
    <location>
        <begin position="37"/>
        <end position="85"/>
    </location>
</feature>
<feature type="disulfide bond" evidence="4">
    <location>
        <begin position="60"/>
        <end position="81"/>
    </location>
</feature>
<name>VKTJ1_CYRHA</name>
<accession>D2Y2G1</accession>
<comment type="function">
    <text evidence="2">Serine protease inhibitor that inhibits trypsin at a molar ratio of 1:1.</text>
</comment>
<comment type="subcellular location">
    <subcellularLocation>
        <location evidence="6">Secreted</location>
    </subcellularLocation>
</comment>
<comment type="tissue specificity">
    <text evidence="6">Expressed by the venom gland.</text>
</comment>
<comment type="similarity">
    <text evidence="5">Belongs to the venom Kunitz-type family. 01 (intermediate) subfamily.</text>
</comment>
<dbReference type="EMBL" id="GU293038">
    <property type="protein sequence ID" value="ADB56854.1"/>
    <property type="molecule type" value="mRNA"/>
</dbReference>
<dbReference type="EMBL" id="GU293130">
    <property type="protein sequence ID" value="ADB56946.1"/>
    <property type="molecule type" value="Genomic_DNA"/>
</dbReference>
<dbReference type="SMR" id="D2Y2G1"/>
<dbReference type="ArachnoServer" id="AS001537">
    <property type="toxin name" value="U15-theraphotoxin-Hhn1j"/>
</dbReference>
<dbReference type="ArachnoServer" id="AS001972">
    <property type="toxin name" value="U15-theraphotoxin-Hhn1j"/>
</dbReference>
<dbReference type="GO" id="GO:0005576">
    <property type="term" value="C:extracellular region"/>
    <property type="evidence" value="ECO:0007669"/>
    <property type="project" value="UniProtKB-SubCell"/>
</dbReference>
<dbReference type="GO" id="GO:0015459">
    <property type="term" value="F:potassium channel regulator activity"/>
    <property type="evidence" value="ECO:0007669"/>
    <property type="project" value="UniProtKB-KW"/>
</dbReference>
<dbReference type="GO" id="GO:0004867">
    <property type="term" value="F:serine-type endopeptidase inhibitor activity"/>
    <property type="evidence" value="ECO:0007669"/>
    <property type="project" value="UniProtKB-KW"/>
</dbReference>
<dbReference type="GO" id="GO:0090729">
    <property type="term" value="F:toxin activity"/>
    <property type="evidence" value="ECO:0007669"/>
    <property type="project" value="UniProtKB-KW"/>
</dbReference>
<dbReference type="GO" id="GO:0044562">
    <property type="term" value="P:envenomation resulting in negative regulation of voltage-gated potassium channel activity in another organism"/>
    <property type="evidence" value="ECO:0007669"/>
    <property type="project" value="UniProtKB-ARBA"/>
</dbReference>
<dbReference type="CDD" id="cd22598">
    <property type="entry name" value="Kunitz_huwentoxin"/>
    <property type="match status" value="1"/>
</dbReference>
<dbReference type="FunFam" id="4.10.410.10:FF:000020">
    <property type="entry name" value="Collagen, type VI, alpha 3"/>
    <property type="match status" value="1"/>
</dbReference>
<dbReference type="Gene3D" id="4.10.410.10">
    <property type="entry name" value="Pancreatic trypsin inhibitor Kunitz domain"/>
    <property type="match status" value="1"/>
</dbReference>
<dbReference type="InterPro" id="IPR002223">
    <property type="entry name" value="Kunitz_BPTI"/>
</dbReference>
<dbReference type="InterPro" id="IPR036880">
    <property type="entry name" value="Kunitz_BPTI_sf"/>
</dbReference>
<dbReference type="PANTHER" id="PTHR47247">
    <property type="entry name" value="KUNITZ-TYPE PROTEASE INHIBITOR 2"/>
    <property type="match status" value="1"/>
</dbReference>
<dbReference type="PANTHER" id="PTHR47247:SF1">
    <property type="entry name" value="KUNITZ-TYPE PROTEASE INHIBITOR 2"/>
    <property type="match status" value="1"/>
</dbReference>
<dbReference type="Pfam" id="PF00014">
    <property type="entry name" value="Kunitz_BPTI"/>
    <property type="match status" value="1"/>
</dbReference>
<dbReference type="PRINTS" id="PR00759">
    <property type="entry name" value="BASICPTASE"/>
</dbReference>
<dbReference type="SMART" id="SM00131">
    <property type="entry name" value="KU"/>
    <property type="match status" value="1"/>
</dbReference>
<dbReference type="SUPFAM" id="SSF57362">
    <property type="entry name" value="BPTI-like"/>
    <property type="match status" value="1"/>
</dbReference>
<dbReference type="PROSITE" id="PS50279">
    <property type="entry name" value="BPTI_KUNITZ_2"/>
    <property type="match status" value="1"/>
</dbReference>
<keyword id="KW-1015">Disulfide bond</keyword>
<keyword id="KW-0646">Protease inhibitor</keyword>
<keyword id="KW-0964">Secreted</keyword>
<keyword id="KW-0722">Serine protease inhibitor</keyword>
<keyword id="KW-0732">Signal</keyword>
<organism>
    <name type="scientific">Cyriopagopus hainanus</name>
    <name type="common">Chinese bird spider</name>
    <name type="synonym">Haplopelma hainanum</name>
    <dbReference type="NCBI Taxonomy" id="209901"/>
    <lineage>
        <taxon>Eukaryota</taxon>
        <taxon>Metazoa</taxon>
        <taxon>Ecdysozoa</taxon>
        <taxon>Arthropoda</taxon>
        <taxon>Chelicerata</taxon>
        <taxon>Arachnida</taxon>
        <taxon>Araneae</taxon>
        <taxon>Mygalomorphae</taxon>
        <taxon>Theraphosidae</taxon>
        <taxon>Haplopelma</taxon>
    </lineage>
</organism>
<protein>
    <recommendedName>
        <fullName>Kunitz-type U15-theraphotoxin-Hhn1j</fullName>
        <shortName>U15-TRTX-Hhn1j</shortName>
    </recommendedName>
    <alternativeName>
        <fullName>Kunitz-type serine protease inhibitor hainantoxin-XI-10</fullName>
        <shortName>HNTX-XI-10</shortName>
    </alternativeName>
</protein>